<proteinExistence type="evidence at protein level"/>
<protein>
    <recommendedName>
        <fullName evidence="3">Phenazine biosynthesis protein PhzD</fullName>
    </recommendedName>
    <alternativeName>
        <fullName evidence="2">2-amino-4-deoxychorismate hydrolase</fullName>
        <ecNumber evidence="1">3.3.2.15</ecNumber>
    </alternativeName>
    <alternativeName>
        <fullName evidence="4">Trans-2,3-dihydro-3-hydroxyanthranilic acid synthase</fullName>
    </alternativeName>
</protein>
<comment type="function">
    <text evidence="1 6">Involved in the biosynthesis of the antibiotic phenazine, a nitrogen-containing heterocyclic molecule having important roles in virulence, competition and biological control. Catalyzes the hydrolysis of the vinyl ether functional group of 2-amino-2-deoxyisochorismate (ADIC), yielding pyruvate and trans-2,3-dihydro-3-hydroxyanthranilic acid (DHHA).</text>
</comment>
<comment type="catalytic activity">
    <reaction evidence="1">
        <text>(2S)-2-amino-4-deoxychorismate + H2O = (5S,6S)-6-amino-5-hydroxycyclohexa-1,3-diene-1-carboxyate + pyruvate</text>
        <dbReference type="Rhea" id="RHEA:49456"/>
        <dbReference type="ChEBI" id="CHEBI:15361"/>
        <dbReference type="ChEBI" id="CHEBI:15377"/>
        <dbReference type="ChEBI" id="CHEBI:58792"/>
        <dbReference type="ChEBI" id="CHEBI:60849"/>
        <dbReference type="EC" id="3.3.2.15"/>
    </reaction>
</comment>
<comment type="pathway">
    <text evidence="6">Antibiotic biosynthesis; phenazine biosynthesis.</text>
</comment>
<comment type="subunit">
    <text evidence="5">Homodimer.</text>
</comment>
<comment type="similarity">
    <text evidence="4">Belongs to the isochorismatase family.</text>
</comment>
<name>PHZD_PSEFL</name>
<feature type="chain" id="PRO_0000201826" description="Phenazine biosynthesis protein PhzD">
    <location>
        <begin position="1"/>
        <end position="207"/>
    </location>
</feature>
<feature type="active site" description="Proton donor" evidence="5">
    <location>
        <position position="38"/>
    </location>
</feature>
<feature type="binding site" evidence="1 7">
    <location>
        <position position="78"/>
    </location>
    <ligand>
        <name>substrate</name>
    </ligand>
</feature>
<feature type="binding site" evidence="1 7">
    <location>
        <position position="87"/>
    </location>
    <ligand>
        <name>substrate</name>
    </ligand>
</feature>
<feature type="binding site" evidence="1 7">
    <location>
        <position position="122"/>
    </location>
    <ligand>
        <name>substrate</name>
    </ligand>
</feature>
<feature type="binding site" evidence="1 7">
    <location>
        <begin position="151"/>
        <end position="155"/>
    </location>
    <ligand>
        <name>substrate</name>
    </ligand>
</feature>
<feature type="mutagenesis site" description="Loss of hydrolase activity." evidence="1">
    <original>D</original>
    <variation>A</variation>
    <location>
        <position position="38"/>
    </location>
</feature>
<feature type="helix" evidence="8">
    <location>
        <begin position="15"/>
        <end position="17"/>
    </location>
</feature>
<feature type="turn" evidence="8">
    <location>
        <begin position="29"/>
        <end position="31"/>
    </location>
</feature>
<feature type="strand" evidence="8">
    <location>
        <begin position="32"/>
        <end position="38"/>
    </location>
</feature>
<feature type="helix" evidence="8">
    <location>
        <begin position="41"/>
        <end position="44"/>
    </location>
</feature>
<feature type="helix" evidence="8">
    <location>
        <begin position="49"/>
        <end position="68"/>
    </location>
</feature>
<feature type="strand" evidence="8">
    <location>
        <begin position="73"/>
        <end position="77"/>
    </location>
</feature>
<feature type="helix" evidence="8">
    <location>
        <begin position="84"/>
        <end position="87"/>
    </location>
</feature>
<feature type="helix" evidence="8">
    <location>
        <begin position="90"/>
        <end position="94"/>
    </location>
</feature>
<feature type="helix" evidence="8">
    <location>
        <begin position="102"/>
        <end position="105"/>
    </location>
</feature>
<feature type="helix" evidence="8">
    <location>
        <begin position="109"/>
        <end position="111"/>
    </location>
</feature>
<feature type="strand" evidence="8">
    <location>
        <begin position="117"/>
        <end position="121"/>
    </location>
</feature>
<feature type="strand" evidence="8">
    <location>
        <begin position="124"/>
        <end position="126"/>
    </location>
</feature>
<feature type="turn" evidence="8">
    <location>
        <begin position="127"/>
        <end position="130"/>
    </location>
</feature>
<feature type="helix" evidence="8">
    <location>
        <begin position="133"/>
        <end position="139"/>
    </location>
</feature>
<feature type="strand" evidence="8">
    <location>
        <begin position="144"/>
        <end position="150"/>
    </location>
</feature>
<feature type="turn" evidence="8">
    <location>
        <begin position="152"/>
        <end position="154"/>
    </location>
</feature>
<feature type="helix" evidence="8">
    <location>
        <begin position="155"/>
        <end position="165"/>
    </location>
</feature>
<feature type="strand" evidence="8">
    <location>
        <begin position="169"/>
        <end position="178"/>
    </location>
</feature>
<feature type="helix" evidence="8">
    <location>
        <begin position="182"/>
        <end position="195"/>
    </location>
</feature>
<feature type="strand" evidence="8">
    <location>
        <begin position="198"/>
        <end position="200"/>
    </location>
</feature>
<feature type="helix" evidence="8">
    <location>
        <begin position="202"/>
        <end position="205"/>
    </location>
</feature>
<evidence type="ECO:0000269" key="1">
    <source>
    </source>
</evidence>
<evidence type="ECO:0000303" key="2">
    <source>
    </source>
</evidence>
<evidence type="ECO:0000303" key="3">
    <source>
    </source>
</evidence>
<evidence type="ECO:0000305" key="4"/>
<evidence type="ECO:0000305" key="5">
    <source>
    </source>
</evidence>
<evidence type="ECO:0000305" key="6">
    <source>
    </source>
</evidence>
<evidence type="ECO:0007744" key="7">
    <source>
        <dbReference type="PDB" id="3R77"/>
    </source>
</evidence>
<evidence type="ECO:0007829" key="8">
    <source>
        <dbReference type="PDB" id="3R77"/>
    </source>
</evidence>
<sequence length="207" mass="23074">MTGIPSIVPYALPTSRDLPANLAQWHIDPERAVLLVHDMQRYFLRPLPDALRDQVVGNAARIRQWAADNGVPVAYTAQPGSMNEEQRGLLKDFWGPGMKASPTDREVVDALAPQPGDWLLTKWRYSAFFNSDLLQRLHASGRDQLILCGVYAHVGVLISSVDAYSNDIQPFLVADAIADFSKEHHWMAMEYAASRCAMVITTDEVVL</sequence>
<keyword id="KW-0002">3D-structure</keyword>
<keyword id="KW-0045">Antibiotic biosynthesis</keyword>
<keyword id="KW-0378">Hydrolase</keyword>
<keyword id="KW-0843">Virulence</keyword>
<reference key="1">
    <citation type="journal article" date="1998" name="J. Bacteriol.">
        <title>A seven-gene locus for synthesis of phenazine-1-carboxylic acid by Pseudomonas fluorescens 2-79.</title>
        <authorList>
            <person name="Mavrodi D.V."/>
            <person name="Ksenzenko V.N."/>
            <person name="Bonsall R.F."/>
            <person name="Cook R.J."/>
            <person name="Boronin A.M."/>
            <person name="Thomashow L.S."/>
        </authorList>
    </citation>
    <scope>NUCLEOTIDE SEQUENCE [GENOMIC DNA]</scope>
    <scope>FUNCTION</scope>
    <scope>PATHWAY</scope>
    <source>
        <strain>NRRL B-15132 / 2-79</strain>
    </source>
</reference>
<reference key="2">
    <citation type="journal article" date="2011" name="J. Biol. Chem.">
        <title>Ligand binding induces an ammonia channel in 2-amino-2-desoxyisochorismate (ADIC) synthase PhzE.</title>
        <authorList>
            <person name="Li Q.A."/>
            <person name="Mavrodi D.V."/>
            <person name="Thomashow L.S."/>
            <person name="Roessle M."/>
            <person name="Blankenfeldt W."/>
        </authorList>
    </citation>
    <scope>X-RAY CRYSTALLOGRAPHY (1.90 ANGSTROMS) OF MUTANT ALA-38 IN COMPLEX WITH SUBSTRATE</scope>
    <scope>FUNCTION</scope>
    <scope>CATALYTIC ACTIVITY</scope>
    <scope>MUTAGENESIS OF ASP-38</scope>
    <scope>ACTIVE SITE</scope>
    <scope>SUBUNIT</scope>
    <source>
        <strain>NRRL B-15132 / 2-79</strain>
    </source>
</reference>
<gene>
    <name evidence="3" type="primary">phzD</name>
</gene>
<dbReference type="EC" id="3.3.2.15" evidence="1"/>
<dbReference type="EMBL" id="L48616">
    <property type="protein sequence ID" value="AAC18903.1"/>
    <property type="molecule type" value="Genomic_DNA"/>
</dbReference>
<dbReference type="RefSeq" id="WP_043050173.1">
    <property type="nucleotide sequence ID" value="NZ_JXCQ01000041.1"/>
</dbReference>
<dbReference type="PDB" id="3R77">
    <property type="method" value="X-ray"/>
    <property type="resolution" value="1.90 A"/>
    <property type="chains" value="A/B=1-207"/>
</dbReference>
<dbReference type="PDBsum" id="3R77"/>
<dbReference type="SMR" id="Q51790"/>
<dbReference type="BRENDA" id="3.3.2.15">
    <property type="organism ID" value="5121"/>
</dbReference>
<dbReference type="BRENDA" id="3.3.2.B1">
    <property type="organism ID" value="5121"/>
</dbReference>
<dbReference type="UniPathway" id="UPA00099"/>
<dbReference type="EvolutionaryTrace" id="Q51790"/>
<dbReference type="GO" id="GO:0008908">
    <property type="term" value="F:isochorismatase activity"/>
    <property type="evidence" value="ECO:0007669"/>
    <property type="project" value="InterPro"/>
</dbReference>
<dbReference type="GO" id="GO:0002047">
    <property type="term" value="P:phenazine biosynthetic process"/>
    <property type="evidence" value="ECO:0007669"/>
    <property type="project" value="UniProtKB-UniPathway"/>
</dbReference>
<dbReference type="CDD" id="cd01013">
    <property type="entry name" value="isochorismatase"/>
    <property type="match status" value="1"/>
</dbReference>
<dbReference type="Gene3D" id="3.40.50.850">
    <property type="entry name" value="Isochorismatase-like"/>
    <property type="match status" value="1"/>
</dbReference>
<dbReference type="InterPro" id="IPR016291">
    <property type="entry name" value="Isochorismatase"/>
</dbReference>
<dbReference type="InterPro" id="IPR000868">
    <property type="entry name" value="Isochorismatase-like_dom"/>
</dbReference>
<dbReference type="InterPro" id="IPR050272">
    <property type="entry name" value="Isochorismatase-like_hydrls"/>
</dbReference>
<dbReference type="InterPro" id="IPR036380">
    <property type="entry name" value="Isochorismatase-like_sf"/>
</dbReference>
<dbReference type="PANTHER" id="PTHR43540:SF3">
    <property type="entry name" value="ENTEROBACTIN SYNTHASE COMPONENT B"/>
    <property type="match status" value="1"/>
</dbReference>
<dbReference type="PANTHER" id="PTHR43540">
    <property type="entry name" value="PEROXYUREIDOACRYLATE/UREIDOACRYLATE AMIDOHYDROLASE-RELATED"/>
    <property type="match status" value="1"/>
</dbReference>
<dbReference type="Pfam" id="PF00857">
    <property type="entry name" value="Isochorismatase"/>
    <property type="match status" value="1"/>
</dbReference>
<dbReference type="PIRSF" id="PIRSF001111">
    <property type="entry name" value="Isochorismatase"/>
    <property type="match status" value="1"/>
</dbReference>
<dbReference type="PRINTS" id="PR01398">
    <property type="entry name" value="ISCHRISMTASE"/>
</dbReference>
<dbReference type="SUPFAM" id="SSF52499">
    <property type="entry name" value="Isochorismatase-like hydrolases"/>
    <property type="match status" value="1"/>
</dbReference>
<organism>
    <name type="scientific">Pseudomonas fluorescens</name>
    <dbReference type="NCBI Taxonomy" id="294"/>
    <lineage>
        <taxon>Bacteria</taxon>
        <taxon>Pseudomonadati</taxon>
        <taxon>Pseudomonadota</taxon>
        <taxon>Gammaproteobacteria</taxon>
        <taxon>Pseudomonadales</taxon>
        <taxon>Pseudomonadaceae</taxon>
        <taxon>Pseudomonas</taxon>
    </lineage>
</organism>
<accession>Q51790</accession>